<evidence type="ECO:0000255" key="1">
    <source>
        <dbReference type="HAMAP-Rule" id="MF_01131"/>
    </source>
</evidence>
<protein>
    <recommendedName>
        <fullName evidence="1">Redox-sensing transcriptional repressor Rex</fullName>
    </recommendedName>
</protein>
<organism>
    <name type="scientific">Staphylococcus aureus (strain MRSA252)</name>
    <dbReference type="NCBI Taxonomy" id="282458"/>
    <lineage>
        <taxon>Bacteria</taxon>
        <taxon>Bacillati</taxon>
        <taxon>Bacillota</taxon>
        <taxon>Bacilli</taxon>
        <taxon>Bacillales</taxon>
        <taxon>Staphylococcaceae</taxon>
        <taxon>Staphylococcus</taxon>
    </lineage>
</organism>
<comment type="function">
    <text evidence="1">Modulates transcription in response to changes in cellular NADH/NAD(+) redox state.</text>
</comment>
<comment type="subunit">
    <text evidence="1">Homodimer.</text>
</comment>
<comment type="subcellular location">
    <subcellularLocation>
        <location evidence="1">Cytoplasm</location>
    </subcellularLocation>
</comment>
<comment type="similarity">
    <text evidence="1">Belongs to the transcriptional regulatory Rex family.</text>
</comment>
<sequence>MSDQVKIPRATLKRLPLYYRFVSSLKSKGIDRVNSKAISDALQIDSATIRRDFSYFGELGKKGYGYNIDSLLDFFKSELSESDMIKIAIVGVGNLGKALLTYNFSIHDDMTITEAFDVKEDVIGQKIGNVIVKDNDELITTLKKEEIDVVILTTPERVAQKVADELVQAGVKGILNFTPGRINTPSDVQVHQIDLGIELQSLLFFMKNYSE</sequence>
<feature type="chain" id="PRO_0000097906" description="Redox-sensing transcriptional repressor Rex">
    <location>
        <begin position="1"/>
        <end position="211"/>
    </location>
</feature>
<feature type="DNA-binding region" description="H-T-H motif" evidence="1">
    <location>
        <begin position="17"/>
        <end position="56"/>
    </location>
</feature>
<feature type="binding site" evidence="1">
    <location>
        <begin position="91"/>
        <end position="96"/>
    </location>
    <ligand>
        <name>NAD(+)</name>
        <dbReference type="ChEBI" id="CHEBI:57540"/>
    </ligand>
</feature>
<proteinExistence type="inferred from homology"/>
<gene>
    <name evidence="1" type="primary">rex</name>
    <name type="ordered locus">SAR2133</name>
</gene>
<name>REX_STAAR</name>
<accession>Q6GF26</accession>
<reference key="1">
    <citation type="journal article" date="2004" name="Proc. Natl. Acad. Sci. U.S.A.">
        <title>Complete genomes of two clinical Staphylococcus aureus strains: evidence for the rapid evolution of virulence and drug resistance.</title>
        <authorList>
            <person name="Holden M.T.G."/>
            <person name="Feil E.J."/>
            <person name="Lindsay J.A."/>
            <person name="Peacock S.J."/>
            <person name="Day N.P.J."/>
            <person name="Enright M.C."/>
            <person name="Foster T.J."/>
            <person name="Moore C.E."/>
            <person name="Hurst L."/>
            <person name="Atkin R."/>
            <person name="Barron A."/>
            <person name="Bason N."/>
            <person name="Bentley S.D."/>
            <person name="Chillingworth C."/>
            <person name="Chillingworth T."/>
            <person name="Churcher C."/>
            <person name="Clark L."/>
            <person name="Corton C."/>
            <person name="Cronin A."/>
            <person name="Doggett J."/>
            <person name="Dowd L."/>
            <person name="Feltwell T."/>
            <person name="Hance Z."/>
            <person name="Harris B."/>
            <person name="Hauser H."/>
            <person name="Holroyd S."/>
            <person name="Jagels K."/>
            <person name="James K.D."/>
            <person name="Lennard N."/>
            <person name="Line A."/>
            <person name="Mayes R."/>
            <person name="Moule S."/>
            <person name="Mungall K."/>
            <person name="Ormond D."/>
            <person name="Quail M.A."/>
            <person name="Rabbinowitsch E."/>
            <person name="Rutherford K.M."/>
            <person name="Sanders M."/>
            <person name="Sharp S."/>
            <person name="Simmonds M."/>
            <person name="Stevens K."/>
            <person name="Whitehead S."/>
            <person name="Barrell B.G."/>
            <person name="Spratt B.G."/>
            <person name="Parkhill J."/>
        </authorList>
    </citation>
    <scope>NUCLEOTIDE SEQUENCE [LARGE SCALE GENOMIC DNA]</scope>
    <source>
        <strain>MRSA252</strain>
    </source>
</reference>
<keyword id="KW-0963">Cytoplasm</keyword>
<keyword id="KW-0238">DNA-binding</keyword>
<keyword id="KW-0520">NAD</keyword>
<keyword id="KW-0678">Repressor</keyword>
<keyword id="KW-0804">Transcription</keyword>
<keyword id="KW-0805">Transcription regulation</keyword>
<dbReference type="EMBL" id="BX571856">
    <property type="protein sequence ID" value="CAG41114.1"/>
    <property type="molecule type" value="Genomic_DNA"/>
</dbReference>
<dbReference type="RefSeq" id="WP_001283612.1">
    <property type="nucleotide sequence ID" value="NC_002952.2"/>
</dbReference>
<dbReference type="SMR" id="Q6GF26"/>
<dbReference type="KEGG" id="sar:SAR2133"/>
<dbReference type="HOGENOM" id="CLU_061534_1_1_9"/>
<dbReference type="Proteomes" id="UP000000596">
    <property type="component" value="Chromosome"/>
</dbReference>
<dbReference type="GO" id="GO:0005737">
    <property type="term" value="C:cytoplasm"/>
    <property type="evidence" value="ECO:0007669"/>
    <property type="project" value="UniProtKB-SubCell"/>
</dbReference>
<dbReference type="GO" id="GO:0003677">
    <property type="term" value="F:DNA binding"/>
    <property type="evidence" value="ECO:0007669"/>
    <property type="project" value="UniProtKB-UniRule"/>
</dbReference>
<dbReference type="GO" id="GO:0003700">
    <property type="term" value="F:DNA-binding transcription factor activity"/>
    <property type="evidence" value="ECO:0007669"/>
    <property type="project" value="UniProtKB-UniRule"/>
</dbReference>
<dbReference type="GO" id="GO:0045892">
    <property type="term" value="P:negative regulation of DNA-templated transcription"/>
    <property type="evidence" value="ECO:0007669"/>
    <property type="project" value="InterPro"/>
</dbReference>
<dbReference type="GO" id="GO:0051775">
    <property type="term" value="P:response to redox state"/>
    <property type="evidence" value="ECO:0007669"/>
    <property type="project" value="InterPro"/>
</dbReference>
<dbReference type="Gene3D" id="3.40.50.720">
    <property type="entry name" value="NAD(P)-binding Rossmann-like Domain"/>
    <property type="match status" value="1"/>
</dbReference>
<dbReference type="Gene3D" id="1.10.10.10">
    <property type="entry name" value="Winged helix-like DNA-binding domain superfamily/Winged helix DNA-binding domain"/>
    <property type="match status" value="1"/>
</dbReference>
<dbReference type="HAMAP" id="MF_01131">
    <property type="entry name" value="Rex"/>
    <property type="match status" value="1"/>
</dbReference>
<dbReference type="InterPro" id="IPR003781">
    <property type="entry name" value="CoA-bd"/>
</dbReference>
<dbReference type="InterPro" id="IPR036291">
    <property type="entry name" value="NAD(P)-bd_dom_sf"/>
</dbReference>
<dbReference type="InterPro" id="IPR009718">
    <property type="entry name" value="Rex_DNA-bd_C_dom"/>
</dbReference>
<dbReference type="InterPro" id="IPR022876">
    <property type="entry name" value="Tscrpt_rep_Rex"/>
</dbReference>
<dbReference type="InterPro" id="IPR036388">
    <property type="entry name" value="WH-like_DNA-bd_sf"/>
</dbReference>
<dbReference type="InterPro" id="IPR036390">
    <property type="entry name" value="WH_DNA-bd_sf"/>
</dbReference>
<dbReference type="NCBIfam" id="NF003989">
    <property type="entry name" value="PRK05472.1-3"/>
    <property type="match status" value="1"/>
</dbReference>
<dbReference type="NCBIfam" id="NF003991">
    <property type="entry name" value="PRK05472.1-5"/>
    <property type="match status" value="1"/>
</dbReference>
<dbReference type="NCBIfam" id="NF003994">
    <property type="entry name" value="PRK05472.2-3"/>
    <property type="match status" value="1"/>
</dbReference>
<dbReference type="NCBIfam" id="NF003995">
    <property type="entry name" value="PRK05472.2-4"/>
    <property type="match status" value="1"/>
</dbReference>
<dbReference type="NCBIfam" id="NF003996">
    <property type="entry name" value="PRK05472.2-5"/>
    <property type="match status" value="1"/>
</dbReference>
<dbReference type="PANTHER" id="PTHR35786">
    <property type="entry name" value="REDOX-SENSING TRANSCRIPTIONAL REPRESSOR REX"/>
    <property type="match status" value="1"/>
</dbReference>
<dbReference type="PANTHER" id="PTHR35786:SF1">
    <property type="entry name" value="REDOX-SENSING TRANSCRIPTIONAL REPRESSOR REX 1"/>
    <property type="match status" value="1"/>
</dbReference>
<dbReference type="Pfam" id="PF02629">
    <property type="entry name" value="CoA_binding"/>
    <property type="match status" value="1"/>
</dbReference>
<dbReference type="Pfam" id="PF06971">
    <property type="entry name" value="Put_DNA-bind_N"/>
    <property type="match status" value="1"/>
</dbReference>
<dbReference type="SMART" id="SM00881">
    <property type="entry name" value="CoA_binding"/>
    <property type="match status" value="1"/>
</dbReference>
<dbReference type="SUPFAM" id="SSF51735">
    <property type="entry name" value="NAD(P)-binding Rossmann-fold domains"/>
    <property type="match status" value="1"/>
</dbReference>
<dbReference type="SUPFAM" id="SSF46785">
    <property type="entry name" value="Winged helix' DNA-binding domain"/>
    <property type="match status" value="1"/>
</dbReference>